<proteinExistence type="inferred from homology"/>
<keyword id="KW-0067">ATP-binding</keyword>
<keyword id="KW-0175">Coiled coil</keyword>
<keyword id="KW-0347">Helicase</keyword>
<keyword id="KW-0378">Hydrolase</keyword>
<keyword id="KW-0547">Nucleotide-binding</keyword>
<keyword id="KW-0539">Nucleus</keyword>
<keyword id="KW-1185">Reference proteome</keyword>
<keyword id="KW-0690">Ribosome biogenesis</keyword>
<keyword id="KW-0694">RNA-binding</keyword>
<keyword id="KW-0698">rRNA processing</keyword>
<reference key="1">
    <citation type="journal article" date="2004" name="Science">
        <title>The Ashbya gossypii genome as a tool for mapping the ancient Saccharomyces cerevisiae genome.</title>
        <authorList>
            <person name="Dietrich F.S."/>
            <person name="Voegeli S."/>
            <person name="Brachat S."/>
            <person name="Lerch A."/>
            <person name="Gates K."/>
            <person name="Steiner S."/>
            <person name="Mohr C."/>
            <person name="Poehlmann R."/>
            <person name="Luedi P."/>
            <person name="Choi S."/>
            <person name="Wing R.A."/>
            <person name="Flavier A."/>
            <person name="Gaffney T.D."/>
            <person name="Philippsen P."/>
        </authorList>
    </citation>
    <scope>NUCLEOTIDE SEQUENCE [LARGE SCALE GENOMIC DNA]</scope>
    <source>
        <strain>ATCC 10895 / CBS 109.51 / FGSC 9923 / NRRL Y-1056</strain>
    </source>
</reference>
<reference key="2">
    <citation type="journal article" date="2013" name="G3 (Bethesda)">
        <title>Genomes of Ashbya fungi isolated from insects reveal four mating-type loci, numerous translocations, lack of transposons, and distinct gene duplications.</title>
        <authorList>
            <person name="Dietrich F.S."/>
            <person name="Voegeli S."/>
            <person name="Kuo S."/>
            <person name="Philippsen P."/>
        </authorList>
    </citation>
    <scope>GENOME REANNOTATION</scope>
    <source>
        <strain>ATCC 10895 / CBS 109.51 / FGSC 9923 / NRRL Y-1056</strain>
    </source>
</reference>
<name>SPB4_EREGS</name>
<evidence type="ECO:0000250" key="1">
    <source>
        <dbReference type="UniProtKB" id="P25808"/>
    </source>
</evidence>
<evidence type="ECO:0000255" key="2"/>
<evidence type="ECO:0000255" key="3">
    <source>
        <dbReference type="PROSITE-ProRule" id="PRU00541"/>
    </source>
</evidence>
<evidence type="ECO:0000255" key="4">
    <source>
        <dbReference type="PROSITE-ProRule" id="PRU00542"/>
    </source>
</evidence>
<evidence type="ECO:0000256" key="5">
    <source>
        <dbReference type="SAM" id="MobiDB-lite"/>
    </source>
</evidence>
<evidence type="ECO:0000305" key="6"/>
<gene>
    <name evidence="1" type="primary">SPB4</name>
    <name type="ordered locus">AGL004C</name>
</gene>
<accession>Q750F8</accession>
<feature type="chain" id="PRO_0000227960" description="ATP-dependent rRNA helicase SPB4">
    <location>
        <begin position="1"/>
        <end position="599"/>
    </location>
</feature>
<feature type="domain" description="Helicase ATP-binding" evidence="3">
    <location>
        <begin position="38"/>
        <end position="224"/>
    </location>
</feature>
<feature type="domain" description="Helicase C-terminal" evidence="4">
    <location>
        <begin position="248"/>
        <end position="415"/>
    </location>
</feature>
<feature type="region of interest" description="Disordered" evidence="5">
    <location>
        <begin position="559"/>
        <end position="599"/>
    </location>
</feature>
<feature type="coiled-coil region" evidence="2">
    <location>
        <begin position="501"/>
        <end position="561"/>
    </location>
</feature>
<feature type="short sequence motif" description="Q motif" evidence="6">
    <location>
        <begin position="7"/>
        <end position="35"/>
    </location>
</feature>
<feature type="short sequence motif" description="DEAD box" evidence="6">
    <location>
        <begin position="172"/>
        <end position="175"/>
    </location>
</feature>
<feature type="compositionally biased region" description="Acidic residues" evidence="5">
    <location>
        <begin position="564"/>
        <end position="573"/>
    </location>
</feature>
<feature type="binding site" evidence="3">
    <location>
        <begin position="51"/>
        <end position="58"/>
    </location>
    <ligand>
        <name>ATP</name>
        <dbReference type="ChEBI" id="CHEBI:30616"/>
    </ligand>
</feature>
<comment type="function">
    <text evidence="1">ATP-binding RNA helicase involved in the biogenesis of 60S ribosomal subunits. Binds 90S pre-ribosomal particles and dissociates from pre-60S ribosomal particles after processing of 27SB pre-rRNA. Required for the normal formation of 18S rRNA through the processing of pre-rRNAs at sites A0, A1 and A2, and the normal formation of 25S and 5.8S rRNAs through the processing of pre-rRNAs at sites C1 and C2.</text>
</comment>
<comment type="catalytic activity">
    <reaction evidence="1">
        <text>ATP + H2O = ADP + phosphate + H(+)</text>
        <dbReference type="Rhea" id="RHEA:13065"/>
        <dbReference type="ChEBI" id="CHEBI:15377"/>
        <dbReference type="ChEBI" id="CHEBI:15378"/>
        <dbReference type="ChEBI" id="CHEBI:30616"/>
        <dbReference type="ChEBI" id="CHEBI:43474"/>
        <dbReference type="ChEBI" id="CHEBI:456216"/>
        <dbReference type="EC" id="3.6.4.13"/>
    </reaction>
</comment>
<comment type="subunit">
    <text evidence="1">Component of pre-60S ribosomal complexes.</text>
</comment>
<comment type="subcellular location">
    <subcellularLocation>
        <location evidence="1">Nucleus</location>
        <location evidence="1">Nucleolus</location>
    </subcellularLocation>
</comment>
<comment type="domain">
    <text>The Q motif is unique to and characteristic of the DEAD box family of RNA helicases and controls ATP binding and hydrolysis.</text>
</comment>
<comment type="similarity">
    <text evidence="6">Belongs to the DEAD box helicase family. DDX55/SPB4 subfamily.</text>
</comment>
<comment type="sequence caution" evidence="6">
    <conflict type="erroneous initiation">
        <sequence resource="EMBL-CDS" id="AAS54486"/>
    </conflict>
</comment>
<organism>
    <name type="scientific">Eremothecium gossypii (strain ATCC 10895 / CBS 109.51 / FGSC 9923 / NRRL Y-1056)</name>
    <name type="common">Yeast</name>
    <name type="synonym">Ashbya gossypii</name>
    <dbReference type="NCBI Taxonomy" id="284811"/>
    <lineage>
        <taxon>Eukaryota</taxon>
        <taxon>Fungi</taxon>
        <taxon>Dikarya</taxon>
        <taxon>Ascomycota</taxon>
        <taxon>Saccharomycotina</taxon>
        <taxon>Saccharomycetes</taxon>
        <taxon>Saccharomycetales</taxon>
        <taxon>Saccharomycetaceae</taxon>
        <taxon>Eremothecium</taxon>
    </lineage>
</organism>
<dbReference type="EC" id="3.6.4.13" evidence="1"/>
<dbReference type="EMBL" id="AE016820">
    <property type="protein sequence ID" value="AAS54486.1"/>
    <property type="status" value="ALT_INIT"/>
    <property type="molecule type" value="Genomic_DNA"/>
</dbReference>
<dbReference type="RefSeq" id="NP_986662.1">
    <property type="nucleotide sequence ID" value="NM_211724.1"/>
</dbReference>
<dbReference type="SMR" id="Q750F8"/>
<dbReference type="FunCoup" id="Q750F8">
    <property type="interactions" value="1265"/>
</dbReference>
<dbReference type="STRING" id="284811.Q750F8"/>
<dbReference type="GeneID" id="4622961"/>
<dbReference type="KEGG" id="ago:AGOS_AGL004C"/>
<dbReference type="eggNOG" id="KOG0345">
    <property type="taxonomic scope" value="Eukaryota"/>
</dbReference>
<dbReference type="InParanoid" id="Q750F8"/>
<dbReference type="OrthoDB" id="7396459at2759"/>
<dbReference type="Proteomes" id="UP000000591">
    <property type="component" value="Chromosome VII"/>
</dbReference>
<dbReference type="GO" id="GO:0005730">
    <property type="term" value="C:nucleolus"/>
    <property type="evidence" value="ECO:0000318"/>
    <property type="project" value="GO_Central"/>
</dbReference>
<dbReference type="GO" id="GO:0005524">
    <property type="term" value="F:ATP binding"/>
    <property type="evidence" value="ECO:0007669"/>
    <property type="project" value="UniProtKB-KW"/>
</dbReference>
<dbReference type="GO" id="GO:0016887">
    <property type="term" value="F:ATP hydrolysis activity"/>
    <property type="evidence" value="ECO:0007669"/>
    <property type="project" value="RHEA"/>
</dbReference>
<dbReference type="GO" id="GO:0003723">
    <property type="term" value="F:RNA binding"/>
    <property type="evidence" value="ECO:0007669"/>
    <property type="project" value="UniProtKB-KW"/>
</dbReference>
<dbReference type="GO" id="GO:0003724">
    <property type="term" value="F:RNA helicase activity"/>
    <property type="evidence" value="ECO:0007669"/>
    <property type="project" value="UniProtKB-EC"/>
</dbReference>
<dbReference type="GO" id="GO:0006364">
    <property type="term" value="P:rRNA processing"/>
    <property type="evidence" value="ECO:0007669"/>
    <property type="project" value="UniProtKB-KW"/>
</dbReference>
<dbReference type="CDD" id="cd17960">
    <property type="entry name" value="DEADc_DDX55"/>
    <property type="match status" value="1"/>
</dbReference>
<dbReference type="CDD" id="cd18787">
    <property type="entry name" value="SF2_C_DEAD"/>
    <property type="match status" value="1"/>
</dbReference>
<dbReference type="Gene3D" id="3.40.50.300">
    <property type="entry name" value="P-loop containing nucleotide triphosphate hydrolases"/>
    <property type="match status" value="2"/>
</dbReference>
<dbReference type="InterPro" id="IPR056330">
    <property type="entry name" value="CTT_SPB4"/>
</dbReference>
<dbReference type="InterPro" id="IPR011545">
    <property type="entry name" value="DEAD/DEAH_box_helicase_dom"/>
</dbReference>
<dbReference type="InterPro" id="IPR014001">
    <property type="entry name" value="Helicase_ATP-bd"/>
</dbReference>
<dbReference type="InterPro" id="IPR001650">
    <property type="entry name" value="Helicase_C-like"/>
</dbReference>
<dbReference type="InterPro" id="IPR027417">
    <property type="entry name" value="P-loop_NTPase"/>
</dbReference>
<dbReference type="InterPro" id="IPR000629">
    <property type="entry name" value="RNA-helicase_DEAD-box_CS"/>
</dbReference>
<dbReference type="InterPro" id="IPR014014">
    <property type="entry name" value="RNA_helicase_DEAD_Q_motif"/>
</dbReference>
<dbReference type="InterPro" id="IPR025313">
    <property type="entry name" value="SPB4-like_CTE"/>
</dbReference>
<dbReference type="PANTHER" id="PTHR24031">
    <property type="entry name" value="RNA HELICASE"/>
    <property type="match status" value="1"/>
</dbReference>
<dbReference type="Pfam" id="PF13959">
    <property type="entry name" value="CTE_SPB4"/>
    <property type="match status" value="1"/>
</dbReference>
<dbReference type="Pfam" id="PF23681">
    <property type="entry name" value="CTT_SPB4"/>
    <property type="match status" value="1"/>
</dbReference>
<dbReference type="Pfam" id="PF00270">
    <property type="entry name" value="DEAD"/>
    <property type="match status" value="1"/>
</dbReference>
<dbReference type="Pfam" id="PF00271">
    <property type="entry name" value="Helicase_C"/>
    <property type="match status" value="1"/>
</dbReference>
<dbReference type="SMART" id="SM00487">
    <property type="entry name" value="DEXDc"/>
    <property type="match status" value="1"/>
</dbReference>
<dbReference type="SMART" id="SM01178">
    <property type="entry name" value="DUF4217"/>
    <property type="match status" value="1"/>
</dbReference>
<dbReference type="SMART" id="SM00490">
    <property type="entry name" value="HELICc"/>
    <property type="match status" value="1"/>
</dbReference>
<dbReference type="SUPFAM" id="SSF52540">
    <property type="entry name" value="P-loop containing nucleoside triphosphate hydrolases"/>
    <property type="match status" value="1"/>
</dbReference>
<dbReference type="PROSITE" id="PS00039">
    <property type="entry name" value="DEAD_ATP_HELICASE"/>
    <property type="match status" value="1"/>
</dbReference>
<dbReference type="PROSITE" id="PS51192">
    <property type="entry name" value="HELICASE_ATP_BIND_1"/>
    <property type="match status" value="1"/>
</dbReference>
<dbReference type="PROSITE" id="PS51194">
    <property type="entry name" value="HELICASE_CTER"/>
    <property type="match status" value="1"/>
</dbReference>
<dbReference type="PROSITE" id="PS51195">
    <property type="entry name" value="Q_MOTIF"/>
    <property type="match status" value="1"/>
</dbReference>
<protein>
    <recommendedName>
        <fullName evidence="6">ATP-dependent rRNA helicase SPB4</fullName>
        <ecNumber evidence="1">3.6.4.13</ecNumber>
    </recommendedName>
</protein>
<sequence>MSKSLSWDTLDYTLQPWIRTAVDAMGYETMTPVQASTIPLFARNKDVVVESVTGSGKTVAFVIPVLERVIQDDANSSKLKKGHFHTIIISPTRELASQIQGVIEAFLTYYPDGEYPIKSQLLIGSNTSSVRDDVAAFLEHRPQILVGTPGRLLDFLKMPNIKTSSCGAAILDEADKLLDMNFEKDVETILKMLPKQRRTGLFSATVSSAGTQVFKTGMRNPVKVSVKTSNKAPSSLDINYIVIEPRMKLQLLLTLLNNYRYKKCIVYLPTCIAVTYFYSILQHLAKLNKMDENLKLYSLHGKLLTNSRMKTLDRFTQELGKAVLLTTDVAARGIDIPDIDLVLQMDPPIDADIFLHRCGRAGRANRAGRAIVFLNQGREEDYIPFLQVKNVEAKELDTVAIKPIEGLPEIIRAWILEDRARFDHSLKVYVAFLRYYSKHTASSIFRLQTLDYIGIAEMHGLIRLPGTPEIQRYLSKDAIPEDGWLVSPPIDLDSFAYADPQREKARKLAKKEAKDVKDNNKLKSEMRKNNEAWSKKTVTKENKLQRKEKMALKRKAIEEKLIENSDDSDNEVETDWKDIVRQRKKKKTNSGMQGDFGDL</sequence>